<name>CYC_ATESP</name>
<proteinExistence type="evidence at protein level"/>
<comment type="function">
    <text>Electron carrier protein. The oxidized form of the cytochrome c heme group can accept an electron from the heme group of the cytochrome c1 subunit of cytochrome reductase. Cytochrome c then transfers this electron to the cytochrome oxidase complex, the final protein carrier in the mitochondrial electron-transport chain.</text>
</comment>
<comment type="function">
    <text evidence="1">Plays a role in apoptosis. Suppression of the anti-apoptotic members or activation of the pro-apoptotic members of the Bcl-2 family leads to altered mitochondrial membrane permeability resulting in release of cytochrome c into the cytosol. Binding of cytochrome c to Apaf-1 triggers the activation of caspase-9, which then accelerates apoptosis by activating other caspases (By similarity).</text>
</comment>
<comment type="subcellular location">
    <subcellularLocation>
        <location>Mitochondrion intermembrane space</location>
    </subcellularLocation>
    <text>Loosely associated with the inner membrane.</text>
</comment>
<comment type="PTM">
    <text>Binds 1 heme c group covalently per subunit.</text>
</comment>
<comment type="PTM">
    <text evidence="1">Phosphorylation at Tyr-49 and Tyr-98 both reduce by half the turnover in the reaction with cytochrome c oxidase, down-regulating mitochondrial respiration.</text>
</comment>
<comment type="similarity">
    <text evidence="5">Belongs to the cytochrome c family.</text>
</comment>
<comment type="online information" name="Protein Spotlight">
    <link uri="https://www.proteinspotlight.org/back_issues/076"/>
    <text>Life shuttle - Issue 76 of November 2006</text>
</comment>
<evidence type="ECO:0000250" key="1"/>
<evidence type="ECO:0000250" key="2">
    <source>
        <dbReference type="UniProtKB" id="P62894"/>
    </source>
</evidence>
<evidence type="ECO:0000250" key="3">
    <source>
        <dbReference type="UniProtKB" id="P62897"/>
    </source>
</evidence>
<evidence type="ECO:0000269" key="4">
    <source>
    </source>
</evidence>
<evidence type="ECO:0000305" key="5"/>
<evidence type="ECO:0007829" key="6">
    <source>
        <dbReference type="PDB" id="5DFS"/>
    </source>
</evidence>
<sequence length="105" mass="11823">MGDVEKGKRIFIMKCSQCHTVEKGGKHKTGPNLHGLFGRKTGQASGFTYTEANKNKGIIWGEDTLMEYLENPKKYIPGTKMIFVGIKKKEERADLIAYLKKATNE</sequence>
<accession>P00003</accession>
<organism>
    <name type="scientific">Ateles sp.</name>
    <name type="common">Spider monkey</name>
    <dbReference type="NCBI Taxonomy" id="9511"/>
    <lineage>
        <taxon>Eukaryota</taxon>
        <taxon>Metazoa</taxon>
        <taxon>Chordata</taxon>
        <taxon>Craniata</taxon>
        <taxon>Vertebrata</taxon>
        <taxon>Euteleostomi</taxon>
        <taxon>Mammalia</taxon>
        <taxon>Eutheria</taxon>
        <taxon>Euarchontoglires</taxon>
        <taxon>Primates</taxon>
        <taxon>Haplorrhini</taxon>
        <taxon>Platyrrhini</taxon>
        <taxon>Atelidae</taxon>
        <taxon>Atelinae</taxon>
        <taxon>Ateles</taxon>
    </lineage>
</organism>
<dbReference type="PIR" id="A00004">
    <property type="entry name" value="CCMKP"/>
</dbReference>
<dbReference type="PDB" id="5DFS">
    <property type="method" value="X-ray"/>
    <property type="resolution" value="1.15 A"/>
    <property type="chains" value="A/B=1-105"/>
</dbReference>
<dbReference type="PDBsum" id="5DFS"/>
<dbReference type="SMR" id="P00003"/>
<dbReference type="GO" id="GO:0005829">
    <property type="term" value="C:cytosol"/>
    <property type="evidence" value="ECO:0000250"/>
    <property type="project" value="UniProtKB"/>
</dbReference>
<dbReference type="GO" id="GO:0005758">
    <property type="term" value="C:mitochondrial intermembrane space"/>
    <property type="evidence" value="ECO:0007669"/>
    <property type="project" value="UniProtKB-SubCell"/>
</dbReference>
<dbReference type="GO" id="GO:0009055">
    <property type="term" value="F:electron transfer activity"/>
    <property type="evidence" value="ECO:0007669"/>
    <property type="project" value="InterPro"/>
</dbReference>
<dbReference type="GO" id="GO:0020037">
    <property type="term" value="F:heme binding"/>
    <property type="evidence" value="ECO:0007669"/>
    <property type="project" value="InterPro"/>
</dbReference>
<dbReference type="GO" id="GO:0046872">
    <property type="term" value="F:metal ion binding"/>
    <property type="evidence" value="ECO:0007669"/>
    <property type="project" value="UniProtKB-KW"/>
</dbReference>
<dbReference type="GO" id="GO:0006915">
    <property type="term" value="P:apoptotic process"/>
    <property type="evidence" value="ECO:0007669"/>
    <property type="project" value="UniProtKB-KW"/>
</dbReference>
<dbReference type="FunFam" id="1.10.760.10:FF:000008">
    <property type="entry name" value="Cytochrome c"/>
    <property type="match status" value="1"/>
</dbReference>
<dbReference type="Gene3D" id="1.10.760.10">
    <property type="entry name" value="Cytochrome c-like domain"/>
    <property type="match status" value="1"/>
</dbReference>
<dbReference type="InterPro" id="IPR009056">
    <property type="entry name" value="Cyt_c-like_dom"/>
</dbReference>
<dbReference type="InterPro" id="IPR036909">
    <property type="entry name" value="Cyt_c-like_dom_sf"/>
</dbReference>
<dbReference type="InterPro" id="IPR002327">
    <property type="entry name" value="Cyt_c_1A/1B"/>
</dbReference>
<dbReference type="PANTHER" id="PTHR11961">
    <property type="entry name" value="CYTOCHROME C"/>
    <property type="match status" value="1"/>
</dbReference>
<dbReference type="Pfam" id="PF00034">
    <property type="entry name" value="Cytochrom_C"/>
    <property type="match status" value="1"/>
</dbReference>
<dbReference type="PRINTS" id="PR00604">
    <property type="entry name" value="CYTCHRMECIAB"/>
</dbReference>
<dbReference type="SUPFAM" id="SSF46626">
    <property type="entry name" value="Cytochrome c"/>
    <property type="match status" value="1"/>
</dbReference>
<dbReference type="PROSITE" id="PS51007">
    <property type="entry name" value="CYTC"/>
    <property type="match status" value="1"/>
</dbReference>
<gene>
    <name type="primary">CYCS</name>
    <name type="synonym">CYC</name>
</gene>
<keyword id="KW-0002">3D-structure</keyword>
<keyword id="KW-0007">Acetylation</keyword>
<keyword id="KW-0053">Apoptosis</keyword>
<keyword id="KW-0903">Direct protein sequencing</keyword>
<keyword id="KW-0249">Electron transport</keyword>
<keyword id="KW-0349">Heme</keyword>
<keyword id="KW-0408">Iron</keyword>
<keyword id="KW-0479">Metal-binding</keyword>
<keyword id="KW-0496">Mitochondrion</keyword>
<keyword id="KW-0597">Phosphoprotein</keyword>
<keyword id="KW-0679">Respiratory chain</keyword>
<keyword id="KW-0813">Transport</keyword>
<protein>
    <recommendedName>
        <fullName>Cytochrome c</fullName>
    </recommendedName>
</protein>
<reference key="1">
    <citation type="journal article" date="1981" name="Biochemistry">
        <title>Protein influences on porphyrin structure in cytochrome c: evidence from Raman difference spectroscopy.</title>
        <authorList>
            <person name="Shelnutt J.A."/>
            <person name="Rousseau D.L."/>
            <person name="Dethmers J.K."/>
            <person name="Margoliash E."/>
        </authorList>
    </citation>
    <scope>PROTEIN SEQUENCE OF 2-105</scope>
</reference>
<feature type="initiator methionine" description="Removed" evidence="4">
    <location>
        <position position="1"/>
    </location>
</feature>
<feature type="chain" id="PRO_0000108208" description="Cytochrome c">
    <location>
        <begin position="2"/>
        <end position="105"/>
    </location>
</feature>
<feature type="binding site" description="covalent">
    <location>
        <position position="15"/>
    </location>
    <ligand>
        <name>heme c</name>
        <dbReference type="ChEBI" id="CHEBI:61717"/>
    </ligand>
</feature>
<feature type="binding site" description="covalent">
    <location>
        <position position="18"/>
    </location>
    <ligand>
        <name>heme c</name>
        <dbReference type="ChEBI" id="CHEBI:61717"/>
    </ligand>
</feature>
<feature type="binding site" description="axial binding residue">
    <location>
        <position position="19"/>
    </location>
    <ligand>
        <name>heme c</name>
        <dbReference type="ChEBI" id="CHEBI:61717"/>
    </ligand>
    <ligandPart>
        <name>Fe</name>
        <dbReference type="ChEBI" id="CHEBI:18248"/>
    </ligandPart>
</feature>
<feature type="binding site" description="axial binding residue">
    <location>
        <position position="81"/>
    </location>
    <ligand>
        <name>heme c</name>
        <dbReference type="ChEBI" id="CHEBI:61717"/>
    </ligand>
    <ligandPart>
        <name>Fe</name>
        <dbReference type="ChEBI" id="CHEBI:18248"/>
    </ligandPart>
</feature>
<feature type="modified residue" description="N-acetylglycine" evidence="2 5">
    <location>
        <position position="2"/>
    </location>
</feature>
<feature type="modified residue" description="Phosphotyrosine" evidence="2">
    <location>
        <position position="49"/>
    </location>
</feature>
<feature type="modified residue" description="N6-succinyllysine" evidence="3">
    <location>
        <position position="56"/>
    </location>
</feature>
<feature type="modified residue" description="N6-acetyllysine; alternate" evidence="3">
    <location>
        <position position="73"/>
    </location>
</feature>
<feature type="modified residue" description="N6-succinyllysine; alternate" evidence="3">
    <location>
        <position position="73"/>
    </location>
</feature>
<feature type="modified residue" description="Phosphotyrosine" evidence="2">
    <location>
        <position position="98"/>
    </location>
</feature>
<feature type="modified residue" description="N6-acetyllysine" evidence="3">
    <location>
        <position position="100"/>
    </location>
</feature>
<feature type="helix" evidence="6">
    <location>
        <begin position="4"/>
        <end position="14"/>
    </location>
</feature>
<feature type="turn" evidence="6">
    <location>
        <begin position="15"/>
        <end position="18"/>
    </location>
</feature>
<feature type="helix" evidence="6">
    <location>
        <begin position="51"/>
        <end position="56"/>
    </location>
</feature>
<feature type="helix" evidence="6">
    <location>
        <begin position="62"/>
        <end position="70"/>
    </location>
</feature>
<feature type="helix" evidence="6">
    <location>
        <begin position="72"/>
        <end position="75"/>
    </location>
</feature>
<feature type="helix" evidence="6">
    <location>
        <begin position="89"/>
        <end position="102"/>
    </location>
</feature>